<proteinExistence type="inferred from homology"/>
<protein>
    <recommendedName>
        <fullName>Expansin-A7</fullName>
        <shortName>AtEXPA7</shortName>
    </recommendedName>
    <alternativeName>
        <fullName>Alpha-expansin-7</fullName>
        <shortName>At-EXP7</shortName>
        <shortName>AtEx7</shortName>
    </alternativeName>
    <alternativeName>
        <fullName>Ath-ExpAlpha-1.26</fullName>
    </alternativeName>
</protein>
<comment type="function">
    <text evidence="1">Causes loosening and extension of plant cell walls by disrupting non-covalent bonding between cellulose microfibrils and matrix glucans. No enzymatic activity has been found (By similarity).</text>
</comment>
<comment type="subcellular location">
    <subcellularLocation>
        <location>Secreted</location>
        <location>Cell wall</location>
    </subcellularLocation>
    <subcellularLocation>
        <location>Membrane</location>
        <topology>Peripheral membrane protein</topology>
    </subcellularLocation>
</comment>
<comment type="similarity">
    <text evidence="5">Belongs to the expansin family. Expansin A subfamily.</text>
</comment>
<comment type="sequence caution" evidence="5">
    <conflict type="erroneous gene model prediction">
        <sequence resource="EMBL-CDS" id="AAF88078"/>
    </conflict>
</comment>
<comment type="online information" name="EXPANSIN homepage">
    <link uri="https://www.dept.psu.edu/biology/groups/expansins/index.htm"/>
</comment>
<sequence length="262" mass="28791">MGPISSSWSFNKFFSIVFVVFAISGEFVAGYYRPGPWRYAHATFYGDETGGETMGGACGYGNLFNSGYGLSTAALSTTLFNDGYGCGQCFQITCSKSPHCYSGKSTVVTATNLCPPNWYQDSNAGGWCNPPRTHFDMAKPAFMKLAYWRAGIIPVAYRRVPCQRSGGMRFQFQGNSYWLLIFVMNVGGAGDIKSMAVKGSRTNWISMSHNWGASYQAFSSLYGQSLSFRVTSYTTGETIYAWNVAPANWSGGKTYKSTANFR</sequence>
<gene>
    <name type="primary">EXPA7</name>
    <name type="synonym">EXP7</name>
    <name type="ordered locus">At1g12560</name>
    <name type="ORF">F5O11.30</name>
    <name type="ORF">T12C24.10</name>
    <name type="ORF">T12C24_8</name>
</gene>
<evidence type="ECO:0000250" key="1"/>
<evidence type="ECO:0000255" key="2"/>
<evidence type="ECO:0000255" key="3">
    <source>
        <dbReference type="PROSITE-ProRule" id="PRU00078"/>
    </source>
</evidence>
<evidence type="ECO:0000255" key="4">
    <source>
        <dbReference type="PROSITE-ProRule" id="PRU00079"/>
    </source>
</evidence>
<evidence type="ECO:0000305" key="5"/>
<name>EXPA7_ARATH</name>
<organism>
    <name type="scientific">Arabidopsis thaliana</name>
    <name type="common">Mouse-ear cress</name>
    <dbReference type="NCBI Taxonomy" id="3702"/>
    <lineage>
        <taxon>Eukaryota</taxon>
        <taxon>Viridiplantae</taxon>
        <taxon>Streptophyta</taxon>
        <taxon>Embryophyta</taxon>
        <taxon>Tracheophyta</taxon>
        <taxon>Spermatophyta</taxon>
        <taxon>Magnoliopsida</taxon>
        <taxon>eudicotyledons</taxon>
        <taxon>Gunneridae</taxon>
        <taxon>Pentapetalae</taxon>
        <taxon>rosids</taxon>
        <taxon>malvids</taxon>
        <taxon>Brassicales</taxon>
        <taxon>Brassicaceae</taxon>
        <taxon>Camelineae</taxon>
        <taxon>Arabidopsis</taxon>
    </lineage>
</organism>
<feature type="signal peptide" evidence="2">
    <location>
        <begin position="1"/>
        <end position="30"/>
    </location>
</feature>
<feature type="chain" id="PRO_0000008688" description="Expansin-A7">
    <location>
        <begin position="31"/>
        <end position="262"/>
    </location>
</feature>
<feature type="domain" description="Expansin-like EG45" evidence="4">
    <location>
        <begin position="55"/>
        <end position="167"/>
    </location>
</feature>
<feature type="domain" description="Expansin-like CBD" evidence="3">
    <location>
        <begin position="177"/>
        <end position="257"/>
    </location>
</feature>
<feature type="disulfide bond" evidence="4">
    <location>
        <begin position="58"/>
        <end position="86"/>
    </location>
</feature>
<feature type="disulfide bond" evidence="4">
    <location>
        <begin position="89"/>
        <end position="162"/>
    </location>
</feature>
<feature type="disulfide bond" evidence="4">
    <location>
        <begin position="94"/>
        <end position="100"/>
    </location>
</feature>
<keyword id="KW-0134">Cell wall</keyword>
<keyword id="KW-0961">Cell wall biogenesis/degradation</keyword>
<keyword id="KW-1015">Disulfide bond</keyword>
<keyword id="KW-0472">Membrane</keyword>
<keyword id="KW-1185">Reference proteome</keyword>
<keyword id="KW-0964">Secreted</keyword>
<keyword id="KW-0732">Signal</keyword>
<dbReference type="EMBL" id="AC025416">
    <property type="protein sequence ID" value="AAF79645.1"/>
    <property type="molecule type" value="Genomic_DNA"/>
</dbReference>
<dbReference type="EMBL" id="AC025417">
    <property type="protein sequence ID" value="AAF88078.1"/>
    <property type="status" value="ALT_SEQ"/>
    <property type="molecule type" value="Genomic_DNA"/>
</dbReference>
<dbReference type="EMBL" id="CP002684">
    <property type="protein sequence ID" value="AEE28897.1"/>
    <property type="molecule type" value="Genomic_DNA"/>
</dbReference>
<dbReference type="PIR" id="F86259">
    <property type="entry name" value="F86259"/>
</dbReference>
<dbReference type="RefSeq" id="NP_172717.1">
    <property type="nucleotide sequence ID" value="NM_101127.4"/>
</dbReference>
<dbReference type="SMR" id="Q9LN94"/>
<dbReference type="STRING" id="3702.Q9LN94"/>
<dbReference type="PaxDb" id="3702-AT1G12560.1"/>
<dbReference type="ProteomicsDB" id="221817"/>
<dbReference type="EnsemblPlants" id="AT1G12560.1">
    <property type="protein sequence ID" value="AT1G12560.1"/>
    <property type="gene ID" value="AT1G12560"/>
</dbReference>
<dbReference type="GeneID" id="837813"/>
<dbReference type="Gramene" id="AT1G12560.1">
    <property type="protein sequence ID" value="AT1G12560.1"/>
    <property type="gene ID" value="AT1G12560"/>
</dbReference>
<dbReference type="KEGG" id="ath:AT1G12560"/>
<dbReference type="Araport" id="AT1G12560"/>
<dbReference type="TAIR" id="AT1G12560">
    <property type="gene designation" value="EXPA7"/>
</dbReference>
<dbReference type="eggNOG" id="ENOG502QR2X">
    <property type="taxonomic scope" value="Eukaryota"/>
</dbReference>
<dbReference type="HOGENOM" id="CLU_027462_0_0_1"/>
<dbReference type="InParanoid" id="Q9LN94"/>
<dbReference type="OMA" id="MSMSHNW"/>
<dbReference type="OrthoDB" id="5823761at2759"/>
<dbReference type="PhylomeDB" id="Q9LN94"/>
<dbReference type="PRO" id="PR:Q9LN94"/>
<dbReference type="Proteomes" id="UP000006548">
    <property type="component" value="Chromosome 1"/>
</dbReference>
<dbReference type="ExpressionAtlas" id="Q9LN94">
    <property type="expression patterns" value="baseline and differential"/>
</dbReference>
<dbReference type="GO" id="GO:0005576">
    <property type="term" value="C:extracellular region"/>
    <property type="evidence" value="ECO:0007669"/>
    <property type="project" value="UniProtKB-KW"/>
</dbReference>
<dbReference type="GO" id="GO:0016020">
    <property type="term" value="C:membrane"/>
    <property type="evidence" value="ECO:0007669"/>
    <property type="project" value="UniProtKB-SubCell"/>
</dbReference>
<dbReference type="GO" id="GO:0009828">
    <property type="term" value="P:plant-type cell wall loosening"/>
    <property type="evidence" value="ECO:0000250"/>
    <property type="project" value="UniProtKB"/>
</dbReference>
<dbReference type="GO" id="GO:0048767">
    <property type="term" value="P:root hair elongation"/>
    <property type="evidence" value="ECO:0000315"/>
    <property type="project" value="TAIR"/>
</dbReference>
<dbReference type="CDD" id="cd22274">
    <property type="entry name" value="DPBB_EXPA_N"/>
    <property type="match status" value="1"/>
</dbReference>
<dbReference type="FunFam" id="2.60.40.760:FF:000001">
    <property type="entry name" value="Expansin"/>
    <property type="match status" value="1"/>
</dbReference>
<dbReference type="Gene3D" id="2.60.40.760">
    <property type="entry name" value="Expansin, cellulose-binding-like domain"/>
    <property type="match status" value="1"/>
</dbReference>
<dbReference type="Gene3D" id="2.40.40.10">
    <property type="entry name" value="RlpA-like domain"/>
    <property type="match status" value="1"/>
</dbReference>
<dbReference type="InterPro" id="IPR007118">
    <property type="entry name" value="Expan_Lol_pI"/>
</dbReference>
<dbReference type="InterPro" id="IPR002963">
    <property type="entry name" value="Expansin"/>
</dbReference>
<dbReference type="InterPro" id="IPR007112">
    <property type="entry name" value="Expansin/allergen_DPBB_dom"/>
</dbReference>
<dbReference type="InterPro" id="IPR007117">
    <property type="entry name" value="Expansin_CBD"/>
</dbReference>
<dbReference type="InterPro" id="IPR036749">
    <property type="entry name" value="Expansin_CBD_sf"/>
</dbReference>
<dbReference type="InterPro" id="IPR009009">
    <property type="entry name" value="RlpA-like_DPBB"/>
</dbReference>
<dbReference type="InterPro" id="IPR036908">
    <property type="entry name" value="RlpA-like_sf"/>
</dbReference>
<dbReference type="PANTHER" id="PTHR31867">
    <property type="entry name" value="EXPANSIN-A15"/>
    <property type="match status" value="1"/>
</dbReference>
<dbReference type="Pfam" id="PF03330">
    <property type="entry name" value="DPBB_1"/>
    <property type="match status" value="1"/>
</dbReference>
<dbReference type="Pfam" id="PF01357">
    <property type="entry name" value="Expansin_C"/>
    <property type="match status" value="1"/>
</dbReference>
<dbReference type="PRINTS" id="PR01226">
    <property type="entry name" value="EXPANSIN"/>
</dbReference>
<dbReference type="PRINTS" id="PR01225">
    <property type="entry name" value="EXPANSNFAMLY"/>
</dbReference>
<dbReference type="SMART" id="SM00837">
    <property type="entry name" value="DPBB_1"/>
    <property type="match status" value="1"/>
</dbReference>
<dbReference type="SUPFAM" id="SSF50685">
    <property type="entry name" value="Barwin-like endoglucanases"/>
    <property type="match status" value="1"/>
</dbReference>
<dbReference type="SUPFAM" id="SSF49590">
    <property type="entry name" value="PHL pollen allergen"/>
    <property type="match status" value="1"/>
</dbReference>
<dbReference type="PROSITE" id="PS50843">
    <property type="entry name" value="EXPANSIN_CBD"/>
    <property type="match status" value="1"/>
</dbReference>
<dbReference type="PROSITE" id="PS50842">
    <property type="entry name" value="EXPANSIN_EG45"/>
    <property type="match status" value="1"/>
</dbReference>
<accession>Q9LN94</accession>
<accession>Q9LN88</accession>
<reference key="1">
    <citation type="journal article" date="2000" name="Nature">
        <title>Sequence and analysis of chromosome 1 of the plant Arabidopsis thaliana.</title>
        <authorList>
            <person name="Theologis A."/>
            <person name="Ecker J.R."/>
            <person name="Palm C.J."/>
            <person name="Federspiel N.A."/>
            <person name="Kaul S."/>
            <person name="White O."/>
            <person name="Alonso J."/>
            <person name="Altafi H."/>
            <person name="Araujo R."/>
            <person name="Bowman C.L."/>
            <person name="Brooks S.Y."/>
            <person name="Buehler E."/>
            <person name="Chan A."/>
            <person name="Chao Q."/>
            <person name="Chen H."/>
            <person name="Cheuk R.F."/>
            <person name="Chin C.W."/>
            <person name="Chung M.K."/>
            <person name="Conn L."/>
            <person name="Conway A.B."/>
            <person name="Conway A.R."/>
            <person name="Creasy T.H."/>
            <person name="Dewar K."/>
            <person name="Dunn P."/>
            <person name="Etgu P."/>
            <person name="Feldblyum T.V."/>
            <person name="Feng J.-D."/>
            <person name="Fong B."/>
            <person name="Fujii C.Y."/>
            <person name="Gill J.E."/>
            <person name="Goldsmith A.D."/>
            <person name="Haas B."/>
            <person name="Hansen N.F."/>
            <person name="Hughes B."/>
            <person name="Huizar L."/>
            <person name="Hunter J.L."/>
            <person name="Jenkins J."/>
            <person name="Johnson-Hopson C."/>
            <person name="Khan S."/>
            <person name="Khaykin E."/>
            <person name="Kim C.J."/>
            <person name="Koo H.L."/>
            <person name="Kremenetskaia I."/>
            <person name="Kurtz D.B."/>
            <person name="Kwan A."/>
            <person name="Lam B."/>
            <person name="Langin-Hooper S."/>
            <person name="Lee A."/>
            <person name="Lee J.M."/>
            <person name="Lenz C.A."/>
            <person name="Li J.H."/>
            <person name="Li Y.-P."/>
            <person name="Lin X."/>
            <person name="Liu S.X."/>
            <person name="Liu Z.A."/>
            <person name="Luros J.S."/>
            <person name="Maiti R."/>
            <person name="Marziali A."/>
            <person name="Militscher J."/>
            <person name="Miranda M."/>
            <person name="Nguyen M."/>
            <person name="Nierman W.C."/>
            <person name="Osborne B.I."/>
            <person name="Pai G."/>
            <person name="Peterson J."/>
            <person name="Pham P.K."/>
            <person name="Rizzo M."/>
            <person name="Rooney T."/>
            <person name="Rowley D."/>
            <person name="Sakano H."/>
            <person name="Salzberg S.L."/>
            <person name="Schwartz J.R."/>
            <person name="Shinn P."/>
            <person name="Southwick A.M."/>
            <person name="Sun H."/>
            <person name="Tallon L.J."/>
            <person name="Tambunga G."/>
            <person name="Toriumi M.J."/>
            <person name="Town C.D."/>
            <person name="Utterback T."/>
            <person name="Van Aken S."/>
            <person name="Vaysberg M."/>
            <person name="Vysotskaia V.S."/>
            <person name="Walker M."/>
            <person name="Wu D."/>
            <person name="Yu G."/>
            <person name="Fraser C.M."/>
            <person name="Venter J.C."/>
            <person name="Davis R.W."/>
        </authorList>
    </citation>
    <scope>NUCLEOTIDE SEQUENCE [LARGE SCALE GENOMIC DNA]</scope>
    <source>
        <strain>cv. Columbia</strain>
    </source>
</reference>
<reference key="2">
    <citation type="journal article" date="2017" name="Plant J.">
        <title>Araport11: a complete reannotation of the Arabidopsis thaliana reference genome.</title>
        <authorList>
            <person name="Cheng C.Y."/>
            <person name="Krishnakumar V."/>
            <person name="Chan A.P."/>
            <person name="Thibaud-Nissen F."/>
            <person name="Schobel S."/>
            <person name="Town C.D."/>
        </authorList>
    </citation>
    <scope>GENOME REANNOTATION</scope>
    <source>
        <strain>cv. Columbia</strain>
    </source>
</reference>
<reference key="3">
    <citation type="journal article" date="2004" name="Plant Mol. Biol.">
        <title>Nomenclature for members of the expansin superfamily of genes and proteins.</title>
        <authorList>
            <person name="Kende H."/>
            <person name="Bradford K.J."/>
            <person name="Brummell D.A."/>
            <person name="Cho H.-T."/>
            <person name="Cosgrove D.J."/>
            <person name="Fleming A.J."/>
            <person name="Gehring C."/>
            <person name="Lee Y."/>
            <person name="McQueen-Mason S.J."/>
            <person name="Rose J.K.C."/>
            <person name="Voesenek L.A.C."/>
        </authorList>
    </citation>
    <scope>NOMENCLATURE</scope>
</reference>